<proteinExistence type="inferred from homology"/>
<gene>
    <name type="primary">rfbA</name>
    <name type="synonym">rmlA1</name>
    <name type="ordered locus">SF2102</name>
    <name type="ordered locus">S2225</name>
</gene>
<evidence type="ECO:0000250" key="1">
    <source>
        <dbReference type="UniProtKB" id="P37744"/>
    </source>
</evidence>
<evidence type="ECO:0000250" key="2">
    <source>
        <dbReference type="UniProtKB" id="P61887"/>
    </source>
</evidence>
<evidence type="ECO:0000305" key="3"/>
<keyword id="KW-0448">Lipopolysaccharide biosynthesis</keyword>
<keyword id="KW-0460">Magnesium</keyword>
<keyword id="KW-0479">Metal-binding</keyword>
<keyword id="KW-0548">Nucleotidyltransferase</keyword>
<keyword id="KW-1185">Reference proteome</keyword>
<keyword id="KW-0808">Transferase</keyword>
<protein>
    <recommendedName>
        <fullName evidence="1">Glucose-1-phosphate thymidylyltransferase 1</fullName>
        <ecNumber evidence="1">2.7.7.24</ecNumber>
    </recommendedName>
    <alternativeName>
        <fullName evidence="1">dTDP-glucose pyrophosphorylase 1</fullName>
    </alternativeName>
    <alternativeName>
        <fullName evidence="1">dTDP-glucose synthase 1</fullName>
    </alternativeName>
</protein>
<comment type="function">
    <text evidence="1">Catalyzes the formation of dTDP-glucose, from dTTP and glucose 1-phosphate, as well as its pyrophosphorolysis.</text>
</comment>
<comment type="catalytic activity">
    <reaction evidence="1">
        <text>dTTP + alpha-D-glucose 1-phosphate + H(+) = dTDP-alpha-D-glucose + diphosphate</text>
        <dbReference type="Rhea" id="RHEA:15225"/>
        <dbReference type="ChEBI" id="CHEBI:15378"/>
        <dbReference type="ChEBI" id="CHEBI:33019"/>
        <dbReference type="ChEBI" id="CHEBI:37568"/>
        <dbReference type="ChEBI" id="CHEBI:57477"/>
        <dbReference type="ChEBI" id="CHEBI:58601"/>
        <dbReference type="EC" id="2.7.7.24"/>
    </reaction>
</comment>
<comment type="cofactor">
    <cofactor evidence="1">
        <name>Mg(2+)</name>
        <dbReference type="ChEBI" id="CHEBI:18420"/>
    </cofactor>
    <text evidence="1">Binds 1 Mg(2+) ion per subunit.</text>
</comment>
<comment type="pathway">
    <text evidence="1">Carbohydrate biosynthesis; dTDP-L-rhamnose biosynthesis.</text>
</comment>
<comment type="pathway">
    <text evidence="1">Bacterial outer membrane biogenesis; LPS O-antigen biosynthesis.</text>
</comment>
<comment type="subunit">
    <text evidence="1">Homotetramer.</text>
</comment>
<comment type="similarity">
    <text evidence="3">Belongs to the glucose-1-phosphate thymidylyltransferase family.</text>
</comment>
<accession>P37779</accession>
<accession>Q54164</accession>
<feature type="chain" id="PRO_0000207999" description="Glucose-1-phosphate thymidylyltransferase 1">
    <location>
        <begin position="1"/>
        <end position="292"/>
    </location>
</feature>
<feature type="binding site" evidence="2">
    <location>
        <position position="111"/>
    </location>
    <ligand>
        <name>Mg(2+)</name>
        <dbReference type="ChEBI" id="CHEBI:18420"/>
    </ligand>
</feature>
<feature type="binding site" evidence="2">
    <location>
        <position position="226"/>
    </location>
    <ligand>
        <name>Mg(2+)</name>
        <dbReference type="ChEBI" id="CHEBI:18420"/>
    </ligand>
</feature>
<feature type="sequence conflict" description="In Ref. 1; CAA50769." evidence="3" ref="1">
    <original>A</original>
    <variation>P</variation>
    <location>
        <position position="157"/>
    </location>
</feature>
<feature type="sequence conflict" description="In Ref. 1; CAA50769." evidence="3" ref="1">
    <original>E</original>
    <variation>Q</variation>
    <location>
        <position position="166"/>
    </location>
</feature>
<feature type="sequence conflict" description="In Ref. 1; CAA50769." evidence="3" ref="1">
    <location>
        <position position="215"/>
    </location>
</feature>
<feature type="sequence conflict" description="In Ref. 1; CAA50769." evidence="3" ref="1">
    <original>W</original>
    <variation>C</variation>
    <location>
        <position position="224"/>
    </location>
</feature>
<feature type="sequence conflict" description="In Ref. 1; CAA50769." evidence="3" ref="1">
    <original>GTHQSL</original>
    <variation>DTSKP</variation>
    <location>
        <begin position="228"/>
        <end position="233"/>
    </location>
</feature>
<feature type="sequence conflict" description="In Ref. 1; CAA50769." evidence="3" ref="1">
    <original>IEE</original>
    <variation>NED</variation>
    <location>
        <begin position="243"/>
        <end position="245"/>
    </location>
</feature>
<reference key="1">
    <citation type="journal article" date="1994" name="Mol. Microbiol.">
        <title>Characterization of the dTDP-rhamnose biosynthetic genes encoded in the rfb locus of Shigella flexneri.</title>
        <authorList>
            <person name="Macpherson D.F."/>
            <person name="Manning P.A."/>
            <person name="Morona R."/>
        </authorList>
    </citation>
    <scope>NUCLEOTIDE SEQUENCE [GENOMIC DNA]</scope>
    <source>
        <strain>PE577 / Serotype 2a</strain>
    </source>
</reference>
<reference key="2">
    <citation type="journal article" date="1994" name="J. Bacteriol.">
        <title>Nucleotide sequence of the rhamnose biosynthetic operon of Shigella flexneri 2a and role of lipopolysaccharide in virulence.</title>
        <authorList>
            <person name="Rajakumar K."/>
            <person name="Jost B.H."/>
            <person name="Sasakawa C."/>
            <person name="Okada N."/>
            <person name="Yoshikawa M."/>
            <person name="Adler B."/>
        </authorList>
    </citation>
    <scope>NUCLEOTIDE SEQUENCE [GENOMIC DNA]</scope>
    <source>
        <strain>YSH6200 / Serotype 2a</strain>
    </source>
</reference>
<reference key="3">
    <citation type="journal article" date="2002" name="Nucleic Acids Res.">
        <title>Genome sequence of Shigella flexneri 2a: insights into pathogenicity through comparison with genomes of Escherichia coli K12 and O157.</title>
        <authorList>
            <person name="Jin Q."/>
            <person name="Yuan Z."/>
            <person name="Xu J."/>
            <person name="Wang Y."/>
            <person name="Shen Y."/>
            <person name="Lu W."/>
            <person name="Wang J."/>
            <person name="Liu H."/>
            <person name="Yang J."/>
            <person name="Yang F."/>
            <person name="Zhang X."/>
            <person name="Zhang J."/>
            <person name="Yang G."/>
            <person name="Wu H."/>
            <person name="Qu D."/>
            <person name="Dong J."/>
            <person name="Sun L."/>
            <person name="Xue Y."/>
            <person name="Zhao A."/>
            <person name="Gao Y."/>
            <person name="Zhu J."/>
            <person name="Kan B."/>
            <person name="Ding K."/>
            <person name="Chen S."/>
            <person name="Cheng H."/>
            <person name="Yao Z."/>
            <person name="He B."/>
            <person name="Chen R."/>
            <person name="Ma D."/>
            <person name="Qiang B."/>
            <person name="Wen Y."/>
            <person name="Hou Y."/>
            <person name="Yu J."/>
        </authorList>
    </citation>
    <scope>NUCLEOTIDE SEQUENCE [LARGE SCALE GENOMIC DNA]</scope>
    <source>
        <strain>301 / Serotype 2a</strain>
    </source>
</reference>
<reference key="4">
    <citation type="journal article" date="2003" name="Infect. Immun.">
        <title>Complete genome sequence and comparative genomics of Shigella flexneri serotype 2a strain 2457T.</title>
        <authorList>
            <person name="Wei J."/>
            <person name="Goldberg M.B."/>
            <person name="Burland V."/>
            <person name="Venkatesan M.M."/>
            <person name="Deng W."/>
            <person name="Fournier G."/>
            <person name="Mayhew G.F."/>
            <person name="Plunkett G. III"/>
            <person name="Rose D.J."/>
            <person name="Darling A."/>
            <person name="Mau B."/>
            <person name="Perna N.T."/>
            <person name="Payne S.M."/>
            <person name="Runyen-Janecky L.J."/>
            <person name="Zhou S."/>
            <person name="Schwartz D.C."/>
            <person name="Blattner F.R."/>
        </authorList>
    </citation>
    <scope>NUCLEOTIDE SEQUENCE [LARGE SCALE GENOMIC DNA]</scope>
    <source>
        <strain>ATCC 700930 / 2457T / Serotype 2a</strain>
    </source>
</reference>
<name>RMLA1_SHIFL</name>
<organism>
    <name type="scientific">Shigella flexneri</name>
    <dbReference type="NCBI Taxonomy" id="623"/>
    <lineage>
        <taxon>Bacteria</taxon>
        <taxon>Pseudomonadati</taxon>
        <taxon>Pseudomonadota</taxon>
        <taxon>Gammaproteobacteria</taxon>
        <taxon>Enterobacterales</taxon>
        <taxon>Enterobacteriaceae</taxon>
        <taxon>Shigella</taxon>
    </lineage>
</organism>
<sequence length="292" mass="32487">MKTRKGIILAGGSGTRLYPVTMAVSKQLLPIYDKPMIYYPLSTLMLAGIRDILIISTPQDTPRFQQLLGDGSQWGLNLQYKVQPSPDGLAQAFIIGEEFIGGDDCALVLGDNIFYGHDLPKLMDTAVNRESGATVFAYHVNDPERYGVVEFDDNGTAISLEEKPQEPKSNYAVTGLYFYDNDVVEMAKNLKPSARGELEITDINRIYMDQGRLSVAMMGRGYAWLDTGTHQSLIEASNFIATIEERQGLKVSCPEEIAHRKGFIDAEQVKVLAEPLKKNAYGQYLLKMIKGY</sequence>
<dbReference type="EC" id="2.7.7.24" evidence="1"/>
<dbReference type="EMBL" id="X71970">
    <property type="protein sequence ID" value="CAA50769.1"/>
    <property type="molecule type" value="Genomic_DNA"/>
</dbReference>
<dbReference type="EMBL" id="L14842">
    <property type="protein sequence ID" value="AAA53681.1"/>
    <property type="molecule type" value="Genomic_DNA"/>
</dbReference>
<dbReference type="EMBL" id="AE005674">
    <property type="protein sequence ID" value="AAN43641.1"/>
    <property type="molecule type" value="Genomic_DNA"/>
</dbReference>
<dbReference type="EMBL" id="AE014073">
    <property type="protein sequence ID" value="AAP17470.1"/>
    <property type="molecule type" value="Genomic_DNA"/>
</dbReference>
<dbReference type="PIR" id="S41536">
    <property type="entry name" value="S41536"/>
</dbReference>
<dbReference type="RefSeq" id="NP_707934.1">
    <property type="nucleotide sequence ID" value="NC_004337.2"/>
</dbReference>
<dbReference type="RefSeq" id="WP_000857518.1">
    <property type="nucleotide sequence ID" value="NZ_WPGW01000076.1"/>
</dbReference>
<dbReference type="SMR" id="P37779"/>
<dbReference type="STRING" id="198214.SF2102"/>
<dbReference type="PaxDb" id="198214-SF2102"/>
<dbReference type="GeneID" id="1025289"/>
<dbReference type="KEGG" id="sfl:SF2102"/>
<dbReference type="KEGG" id="sfx:S2225"/>
<dbReference type="PATRIC" id="fig|198214.7.peg.2510"/>
<dbReference type="HOGENOM" id="CLU_029499_9_0_6"/>
<dbReference type="UniPathway" id="UPA00124"/>
<dbReference type="UniPathway" id="UPA00281"/>
<dbReference type="Proteomes" id="UP000001006">
    <property type="component" value="Chromosome"/>
</dbReference>
<dbReference type="Proteomes" id="UP000002673">
    <property type="component" value="Chromosome"/>
</dbReference>
<dbReference type="GO" id="GO:0008879">
    <property type="term" value="F:glucose-1-phosphate thymidylyltransferase activity"/>
    <property type="evidence" value="ECO:0007669"/>
    <property type="project" value="UniProtKB-EC"/>
</dbReference>
<dbReference type="GO" id="GO:0046872">
    <property type="term" value="F:metal ion binding"/>
    <property type="evidence" value="ECO:0007669"/>
    <property type="project" value="UniProtKB-KW"/>
</dbReference>
<dbReference type="GO" id="GO:0019305">
    <property type="term" value="P:dTDP-rhamnose biosynthetic process"/>
    <property type="evidence" value="ECO:0007669"/>
    <property type="project" value="UniProtKB-UniPathway"/>
</dbReference>
<dbReference type="GO" id="GO:0009243">
    <property type="term" value="P:O antigen biosynthetic process"/>
    <property type="evidence" value="ECO:0007669"/>
    <property type="project" value="UniProtKB-UniPathway"/>
</dbReference>
<dbReference type="CDD" id="cd02538">
    <property type="entry name" value="G1P_TT_short"/>
    <property type="match status" value="1"/>
</dbReference>
<dbReference type="FunFam" id="3.90.550.10:FF:000023">
    <property type="entry name" value="Glucose-1-phosphate thymidylyltransferase"/>
    <property type="match status" value="1"/>
</dbReference>
<dbReference type="Gene3D" id="3.90.550.10">
    <property type="entry name" value="Spore Coat Polysaccharide Biosynthesis Protein SpsA, Chain A"/>
    <property type="match status" value="1"/>
</dbReference>
<dbReference type="InterPro" id="IPR005907">
    <property type="entry name" value="G1P_thy_trans_s"/>
</dbReference>
<dbReference type="InterPro" id="IPR005835">
    <property type="entry name" value="NTP_transferase_dom"/>
</dbReference>
<dbReference type="InterPro" id="IPR029044">
    <property type="entry name" value="Nucleotide-diphossugar_trans"/>
</dbReference>
<dbReference type="NCBIfam" id="NF012024">
    <property type="entry name" value="PRK15480.1"/>
    <property type="match status" value="1"/>
</dbReference>
<dbReference type="NCBIfam" id="TIGR01207">
    <property type="entry name" value="rmlA"/>
    <property type="match status" value="1"/>
</dbReference>
<dbReference type="PANTHER" id="PTHR43532">
    <property type="entry name" value="GLUCOSE-1-PHOSPHATE THYMIDYLYLTRANSFERASE"/>
    <property type="match status" value="1"/>
</dbReference>
<dbReference type="PANTHER" id="PTHR43532:SF1">
    <property type="entry name" value="GLUCOSE-1-PHOSPHATE THYMIDYLYLTRANSFERASE 1"/>
    <property type="match status" value="1"/>
</dbReference>
<dbReference type="Pfam" id="PF00483">
    <property type="entry name" value="NTP_transferase"/>
    <property type="match status" value="1"/>
</dbReference>
<dbReference type="SUPFAM" id="SSF53448">
    <property type="entry name" value="Nucleotide-diphospho-sugar transferases"/>
    <property type="match status" value="1"/>
</dbReference>